<reference key="1">
    <citation type="journal article" date="2005" name="Genome Res.">
        <title>Coping with cold: the genome of the versatile marine Antarctica bacterium Pseudoalteromonas haloplanktis TAC125.</title>
        <authorList>
            <person name="Medigue C."/>
            <person name="Krin E."/>
            <person name="Pascal G."/>
            <person name="Barbe V."/>
            <person name="Bernsel A."/>
            <person name="Bertin P.N."/>
            <person name="Cheung F."/>
            <person name="Cruveiller S."/>
            <person name="D'Amico S."/>
            <person name="Duilio A."/>
            <person name="Fang G."/>
            <person name="Feller G."/>
            <person name="Ho C."/>
            <person name="Mangenot S."/>
            <person name="Marino G."/>
            <person name="Nilsson J."/>
            <person name="Parrilli E."/>
            <person name="Rocha E.P.C."/>
            <person name="Rouy Z."/>
            <person name="Sekowska A."/>
            <person name="Tutino M.L."/>
            <person name="Vallenet D."/>
            <person name="von Heijne G."/>
            <person name="Danchin A."/>
        </authorList>
    </citation>
    <scope>NUCLEOTIDE SEQUENCE [LARGE SCALE GENOMIC DNA]</scope>
    <source>
        <strain>TAC 125</strain>
    </source>
</reference>
<dbReference type="EMBL" id="CR954246">
    <property type="protein sequence ID" value="CAI85693.1"/>
    <property type="molecule type" value="Genomic_DNA"/>
</dbReference>
<dbReference type="SMR" id="Q3ILK5"/>
<dbReference type="STRING" id="326442.PSHAa0607"/>
<dbReference type="KEGG" id="pha:PSHAa0607"/>
<dbReference type="PATRIC" id="fig|326442.8.peg.572"/>
<dbReference type="eggNOG" id="COG1489">
    <property type="taxonomic scope" value="Bacteria"/>
</dbReference>
<dbReference type="HOGENOM" id="CLU_052299_2_0_6"/>
<dbReference type="BioCyc" id="PHAL326442:PSHA_RS02980-MONOMER"/>
<dbReference type="Proteomes" id="UP000006843">
    <property type="component" value="Chromosome I"/>
</dbReference>
<dbReference type="GO" id="GO:0003677">
    <property type="term" value="F:DNA binding"/>
    <property type="evidence" value="ECO:0007669"/>
    <property type="project" value="InterPro"/>
</dbReference>
<dbReference type="CDD" id="cd22359">
    <property type="entry name" value="SfsA-like_bacterial"/>
    <property type="match status" value="1"/>
</dbReference>
<dbReference type="FunFam" id="2.40.50.580:FF:000001">
    <property type="entry name" value="Sugar fermentation stimulation protein A"/>
    <property type="match status" value="1"/>
</dbReference>
<dbReference type="FunFam" id="3.40.1350.60:FF:000001">
    <property type="entry name" value="Sugar fermentation stimulation protein A"/>
    <property type="match status" value="1"/>
</dbReference>
<dbReference type="Gene3D" id="2.40.50.580">
    <property type="match status" value="1"/>
</dbReference>
<dbReference type="Gene3D" id="3.40.1350.60">
    <property type="match status" value="1"/>
</dbReference>
<dbReference type="HAMAP" id="MF_00095">
    <property type="entry name" value="SfsA"/>
    <property type="match status" value="1"/>
</dbReference>
<dbReference type="InterPro" id="IPR005224">
    <property type="entry name" value="SfsA"/>
</dbReference>
<dbReference type="InterPro" id="IPR040452">
    <property type="entry name" value="SfsA_C"/>
</dbReference>
<dbReference type="InterPro" id="IPR041465">
    <property type="entry name" value="SfsA_N"/>
</dbReference>
<dbReference type="NCBIfam" id="TIGR00230">
    <property type="entry name" value="sfsA"/>
    <property type="match status" value="1"/>
</dbReference>
<dbReference type="PANTHER" id="PTHR30545">
    <property type="entry name" value="SUGAR FERMENTATION STIMULATION PROTEIN A"/>
    <property type="match status" value="1"/>
</dbReference>
<dbReference type="PANTHER" id="PTHR30545:SF2">
    <property type="entry name" value="SUGAR FERMENTATION STIMULATION PROTEIN A"/>
    <property type="match status" value="1"/>
</dbReference>
<dbReference type="Pfam" id="PF03749">
    <property type="entry name" value="SfsA"/>
    <property type="match status" value="1"/>
</dbReference>
<dbReference type="Pfam" id="PF17746">
    <property type="entry name" value="SfsA_N"/>
    <property type="match status" value="1"/>
</dbReference>
<accession>Q3ILK5</accession>
<organism>
    <name type="scientific">Pseudoalteromonas translucida (strain TAC 125)</name>
    <dbReference type="NCBI Taxonomy" id="326442"/>
    <lineage>
        <taxon>Bacteria</taxon>
        <taxon>Pseudomonadati</taxon>
        <taxon>Pseudomonadota</taxon>
        <taxon>Gammaproteobacteria</taxon>
        <taxon>Alteromonadales</taxon>
        <taxon>Pseudoalteromonadaceae</taxon>
        <taxon>Pseudoalteromonas</taxon>
    </lineage>
</organism>
<feature type="chain" id="PRO_1000008012" description="Sugar fermentation stimulation protein homolog">
    <location>
        <begin position="1"/>
        <end position="238"/>
    </location>
</feature>
<protein>
    <recommendedName>
        <fullName evidence="1">Sugar fermentation stimulation protein homolog</fullName>
    </recommendedName>
</protein>
<name>SFSA_PSET1</name>
<evidence type="ECO:0000255" key="1">
    <source>
        <dbReference type="HAMAP-Rule" id="MF_00095"/>
    </source>
</evidence>
<comment type="similarity">
    <text evidence="1">Belongs to the SfsA family.</text>
</comment>
<sequence>MKYQPALQSATLLKRYKRFLADLQLSDGSEFTAHCANTGKMTGCAEPGFNAFYSTSTNSKRKYPQSLELTQNSLSQLICVNTAVANKVVAEAINANLISELSNYEQLQSEVKYGNENSRIDFLLTSDERPNCYVEVKSVTLLSQDNPHSGQGYFPDAPTLRGQKHIRELIEMVEQGHRAVLLFAVLHQGINQVSAAAHIDNKYAQLLNEAINQGVEVLAYKADISTNEIILKEKLPFI</sequence>
<proteinExistence type="inferred from homology"/>
<keyword id="KW-1185">Reference proteome</keyword>
<gene>
    <name evidence="1" type="primary">sfsA</name>
    <name type="ordered locus">PSHAa0607</name>
</gene>